<name>Y1880_KORVE</name>
<organism>
    <name type="scientific">Koribacter versatilis (strain Ellin345)</name>
    <dbReference type="NCBI Taxonomy" id="204669"/>
    <lineage>
        <taxon>Bacteria</taxon>
        <taxon>Pseudomonadati</taxon>
        <taxon>Acidobacteriota</taxon>
        <taxon>Terriglobia</taxon>
        <taxon>Terriglobales</taxon>
        <taxon>Candidatus Korobacteraceae</taxon>
        <taxon>Candidatus Korobacter</taxon>
    </lineage>
</organism>
<sequence length="145" mass="15716">MYPEIMLVPMREELTRIGIEETRTADAVDDAVRGTEGTLMVVVNSVCGCAAGKMRPGIRRAFDHATKPARSITVFAGQDGEATDRARGYFTGYPPSSPSIGFLREGQLVHMIQRSDIETRTADQIEALLTQAFDQYCGATAGAKS</sequence>
<reference key="1">
    <citation type="journal article" date="2009" name="Appl. Environ. Microbiol.">
        <title>Three genomes from the phylum Acidobacteria provide insight into the lifestyles of these microorganisms in soils.</title>
        <authorList>
            <person name="Ward N.L."/>
            <person name="Challacombe J.F."/>
            <person name="Janssen P.H."/>
            <person name="Henrissat B."/>
            <person name="Coutinho P.M."/>
            <person name="Wu M."/>
            <person name="Xie G."/>
            <person name="Haft D.H."/>
            <person name="Sait M."/>
            <person name="Badger J."/>
            <person name="Barabote R.D."/>
            <person name="Bradley B."/>
            <person name="Brettin T.S."/>
            <person name="Brinkac L.M."/>
            <person name="Bruce D."/>
            <person name="Creasy T."/>
            <person name="Daugherty S.C."/>
            <person name="Davidsen T.M."/>
            <person name="DeBoy R.T."/>
            <person name="Detter J.C."/>
            <person name="Dodson R.J."/>
            <person name="Durkin A.S."/>
            <person name="Ganapathy A."/>
            <person name="Gwinn-Giglio M."/>
            <person name="Han C.S."/>
            <person name="Khouri H."/>
            <person name="Kiss H."/>
            <person name="Kothari S.P."/>
            <person name="Madupu R."/>
            <person name="Nelson K.E."/>
            <person name="Nelson W.C."/>
            <person name="Paulsen I."/>
            <person name="Penn K."/>
            <person name="Ren Q."/>
            <person name="Rosovitz M.J."/>
            <person name="Selengut J.D."/>
            <person name="Shrivastava S."/>
            <person name="Sullivan S.A."/>
            <person name="Tapia R."/>
            <person name="Thompson L.S."/>
            <person name="Watkins K.L."/>
            <person name="Yang Q."/>
            <person name="Yu C."/>
            <person name="Zafar N."/>
            <person name="Zhou L."/>
            <person name="Kuske C.R."/>
        </authorList>
    </citation>
    <scope>NUCLEOTIDE SEQUENCE [LARGE SCALE GENOMIC DNA]</scope>
    <source>
        <strain>Ellin345</strain>
    </source>
</reference>
<accession>Q1IQG9</accession>
<comment type="similarity">
    <text evidence="1">Belongs to the bacilliredoxin family.</text>
</comment>
<protein>
    <recommendedName>
        <fullName evidence="1">Bacilliredoxin Acid345_1880</fullName>
    </recommendedName>
</protein>
<dbReference type="EMBL" id="CP000360">
    <property type="protein sequence ID" value="ABF40881.1"/>
    <property type="molecule type" value="Genomic_DNA"/>
</dbReference>
<dbReference type="RefSeq" id="WP_011522683.1">
    <property type="nucleotide sequence ID" value="NC_008009.1"/>
</dbReference>
<dbReference type="SMR" id="Q1IQG9"/>
<dbReference type="STRING" id="204669.Acid345_1880"/>
<dbReference type="EnsemblBacteria" id="ABF40881">
    <property type="protein sequence ID" value="ABF40881"/>
    <property type="gene ID" value="Acid345_1880"/>
</dbReference>
<dbReference type="KEGG" id="aba:Acid345_1880"/>
<dbReference type="eggNOG" id="ENOG502ZBVN">
    <property type="taxonomic scope" value="Bacteria"/>
</dbReference>
<dbReference type="HOGENOM" id="CLU_132521_0_0_0"/>
<dbReference type="OrthoDB" id="9793981at2"/>
<dbReference type="Proteomes" id="UP000002432">
    <property type="component" value="Chromosome"/>
</dbReference>
<dbReference type="GO" id="GO:0045454">
    <property type="term" value="P:cell redox homeostasis"/>
    <property type="evidence" value="ECO:0000250"/>
    <property type="project" value="UniProtKB"/>
</dbReference>
<dbReference type="Gene3D" id="3.40.30.10">
    <property type="entry name" value="Glutaredoxin"/>
    <property type="match status" value="1"/>
</dbReference>
<dbReference type="InterPro" id="IPR009474">
    <property type="entry name" value="BrxB/BrxA"/>
</dbReference>
<dbReference type="NCBIfam" id="TIGR04191">
    <property type="entry name" value="YphP_YqiW"/>
    <property type="match status" value="1"/>
</dbReference>
<dbReference type="PANTHER" id="PTHR40052:SF2">
    <property type="entry name" value="BACILLIREDOXIN BRXA"/>
    <property type="match status" value="1"/>
</dbReference>
<dbReference type="PANTHER" id="PTHR40052">
    <property type="entry name" value="UPF0403 PROTEIN YQIW-RELATED"/>
    <property type="match status" value="1"/>
</dbReference>
<dbReference type="Pfam" id="PF06491">
    <property type="entry name" value="Disulph_isomer"/>
    <property type="match status" value="1"/>
</dbReference>
<proteinExistence type="inferred from homology"/>
<feature type="chain" id="PRO_0000271972" description="Bacilliredoxin Acid345_1880">
    <location>
        <begin position="1"/>
        <end position="145"/>
    </location>
</feature>
<gene>
    <name type="ordered locus">Acid345_1880</name>
</gene>
<evidence type="ECO:0000305" key="1"/>
<keyword id="KW-1185">Reference proteome</keyword>